<protein>
    <recommendedName>
        <fullName>LIM domain kinase 1</fullName>
        <shortName>LIMK-1</shortName>
        <shortName>chLIMK1</shortName>
        <ecNumber evidence="1">2.7.11.1</ecNumber>
    </recommendedName>
</protein>
<comment type="function">
    <text evidence="6">Protein kinase which regulates actin filament dynamics. Phosphorylates and inactivates the actin binding/depolymerizing factor cofilin, thereby stabilizing the actin cytoskeleton. Required for motility of the axon growth cone.</text>
</comment>
<comment type="catalytic activity">
    <reaction evidence="1">
        <text>L-seryl-[protein] + ATP = O-phospho-L-seryl-[protein] + ADP + H(+)</text>
        <dbReference type="Rhea" id="RHEA:17989"/>
        <dbReference type="Rhea" id="RHEA-COMP:9863"/>
        <dbReference type="Rhea" id="RHEA-COMP:11604"/>
        <dbReference type="ChEBI" id="CHEBI:15378"/>
        <dbReference type="ChEBI" id="CHEBI:29999"/>
        <dbReference type="ChEBI" id="CHEBI:30616"/>
        <dbReference type="ChEBI" id="CHEBI:83421"/>
        <dbReference type="ChEBI" id="CHEBI:456216"/>
        <dbReference type="EC" id="2.7.11.1"/>
    </reaction>
    <physiologicalReaction direction="left-to-right" evidence="1">
        <dbReference type="Rhea" id="RHEA:17990"/>
    </physiologicalReaction>
</comment>
<comment type="catalytic activity">
    <reaction evidence="1">
        <text>L-threonyl-[protein] + ATP = O-phospho-L-threonyl-[protein] + ADP + H(+)</text>
        <dbReference type="Rhea" id="RHEA:46608"/>
        <dbReference type="Rhea" id="RHEA-COMP:11060"/>
        <dbReference type="Rhea" id="RHEA-COMP:11605"/>
        <dbReference type="ChEBI" id="CHEBI:15378"/>
        <dbReference type="ChEBI" id="CHEBI:30013"/>
        <dbReference type="ChEBI" id="CHEBI:30616"/>
        <dbReference type="ChEBI" id="CHEBI:61977"/>
        <dbReference type="ChEBI" id="CHEBI:456216"/>
        <dbReference type="EC" id="2.7.11.1"/>
    </reaction>
    <physiologicalReaction direction="left-to-right" evidence="1">
        <dbReference type="Rhea" id="RHEA:46609"/>
    </physiologicalReaction>
</comment>
<comment type="subcellular location">
    <subcellularLocation>
        <location evidence="6">Cytoplasm</location>
    </subcellularLocation>
    <subcellularLocation>
        <location evidence="1">Nucleus</location>
    </subcellularLocation>
    <subcellularLocation>
        <location evidence="1">Cytoplasm</location>
        <location evidence="1">Cytoskeleton</location>
    </subcellularLocation>
    <subcellularLocation>
        <location evidence="6">Cell projection</location>
        <location evidence="6">Growth cone</location>
    </subcellularLocation>
    <text>Recruited to axon growth cones.</text>
</comment>
<comment type="tissue specificity">
    <text evidence="6">Expressed predominantly in the brain.</text>
</comment>
<comment type="similarity">
    <text evidence="7">Belongs to the protein kinase superfamily. TKL Ser/Thr protein kinase family.</text>
</comment>
<feature type="chain" id="PRO_0000075806" description="LIM domain kinase 1">
    <location>
        <begin position="1"/>
        <end position="662"/>
    </location>
</feature>
<feature type="domain" description="LIM zinc-binding 1" evidence="2">
    <location>
        <begin position="24"/>
        <end position="83"/>
    </location>
</feature>
<feature type="domain" description="LIM zinc-binding 2" evidence="2">
    <location>
        <begin position="84"/>
        <end position="145"/>
    </location>
</feature>
<feature type="domain" description="PDZ" evidence="3">
    <location>
        <begin position="166"/>
        <end position="259"/>
    </location>
</feature>
<feature type="domain" description="Protein kinase" evidence="4">
    <location>
        <begin position="346"/>
        <end position="611"/>
    </location>
</feature>
<feature type="region of interest" description="Disordered" evidence="5">
    <location>
        <begin position="262"/>
        <end position="328"/>
    </location>
</feature>
<feature type="compositionally biased region" description="Pro residues" evidence="5">
    <location>
        <begin position="272"/>
        <end position="287"/>
    </location>
</feature>
<feature type="compositionally biased region" description="Low complexity" evidence="5">
    <location>
        <begin position="309"/>
        <end position="320"/>
    </location>
</feature>
<feature type="active site" evidence="7">
    <location>
        <position position="467"/>
    </location>
</feature>
<feature type="binding site" evidence="4">
    <location>
        <begin position="352"/>
        <end position="360"/>
    </location>
    <ligand>
        <name>ATP</name>
        <dbReference type="ChEBI" id="CHEBI:30616"/>
    </ligand>
</feature>
<feature type="binding site" evidence="4">
    <location>
        <position position="375"/>
    </location>
    <ligand>
        <name>ATP</name>
        <dbReference type="ChEBI" id="CHEBI:30616"/>
    </ligand>
</feature>
<feature type="mutagenesis site" description="Abrogates kinase activity." evidence="6">
    <original>D</original>
    <variation>A</variation>
    <location>
        <position position="467"/>
    </location>
</feature>
<keyword id="KW-0067">ATP-binding</keyword>
<keyword id="KW-0966">Cell projection</keyword>
<keyword id="KW-0963">Cytoplasm</keyword>
<keyword id="KW-0206">Cytoskeleton</keyword>
<keyword id="KW-0418">Kinase</keyword>
<keyword id="KW-0440">LIM domain</keyword>
<keyword id="KW-0479">Metal-binding</keyword>
<keyword id="KW-0547">Nucleotide-binding</keyword>
<keyword id="KW-0539">Nucleus</keyword>
<keyword id="KW-1185">Reference proteome</keyword>
<keyword id="KW-0677">Repeat</keyword>
<keyword id="KW-0723">Serine/threonine-protein kinase</keyword>
<keyword id="KW-0808">Transferase</keyword>
<keyword id="KW-0862">Zinc</keyword>
<proteinExistence type="evidence at protein level"/>
<name>LIMK1_CHICK</name>
<accession>Q8QFP8</accession>
<dbReference type="EC" id="2.7.11.1" evidence="1"/>
<dbReference type="EMBL" id="AB073752">
    <property type="protein sequence ID" value="BAB88398.1"/>
    <property type="molecule type" value="mRNA"/>
</dbReference>
<dbReference type="RefSeq" id="NP_989462.1">
    <property type="nucleotide sequence ID" value="NM_204131.2"/>
</dbReference>
<dbReference type="SMR" id="Q8QFP8"/>
<dbReference type="FunCoup" id="Q8QFP8">
    <property type="interactions" value="835"/>
</dbReference>
<dbReference type="STRING" id="9031.ENSGALP00000039786"/>
<dbReference type="PaxDb" id="9031-ENSGALP00000039786"/>
<dbReference type="Ensembl" id="ENSGALT00010071510.1">
    <property type="protein sequence ID" value="ENSGALP00010044200.1"/>
    <property type="gene ID" value="ENSGALG00010029583.1"/>
</dbReference>
<dbReference type="GeneID" id="373922"/>
<dbReference type="KEGG" id="gga:373922"/>
<dbReference type="CTD" id="3984"/>
<dbReference type="VEuPathDB" id="HostDB:geneid_373922"/>
<dbReference type="eggNOG" id="KOG1187">
    <property type="taxonomic scope" value="Eukaryota"/>
</dbReference>
<dbReference type="GeneTree" id="ENSGT00940000156345"/>
<dbReference type="HOGENOM" id="CLU_000288_7_23_1"/>
<dbReference type="InParanoid" id="Q8QFP8"/>
<dbReference type="OMA" id="QRICDGQ"/>
<dbReference type="OrthoDB" id="20134at2759"/>
<dbReference type="PhylomeDB" id="Q8QFP8"/>
<dbReference type="Reactome" id="R-GGA-2029482">
    <property type="pathway name" value="Regulation of actin dynamics for phagocytic cup formation"/>
</dbReference>
<dbReference type="Reactome" id="R-GGA-399954">
    <property type="pathway name" value="Sema3A PAK dependent Axon repulsion"/>
</dbReference>
<dbReference type="Reactome" id="R-GGA-5627123">
    <property type="pathway name" value="RHO GTPases activate PAKs"/>
</dbReference>
<dbReference type="PRO" id="PR:Q8QFP8"/>
<dbReference type="Proteomes" id="UP000000539">
    <property type="component" value="Chromosome 19"/>
</dbReference>
<dbReference type="Bgee" id="ENSGALG00000001076">
    <property type="expression patterns" value="Expressed in cerebellum and 11 other cell types or tissues"/>
</dbReference>
<dbReference type="GO" id="GO:0005737">
    <property type="term" value="C:cytoplasm"/>
    <property type="evidence" value="ECO:0000318"/>
    <property type="project" value="GO_Central"/>
</dbReference>
<dbReference type="GO" id="GO:0005856">
    <property type="term" value="C:cytoskeleton"/>
    <property type="evidence" value="ECO:0007669"/>
    <property type="project" value="UniProtKB-SubCell"/>
</dbReference>
<dbReference type="GO" id="GO:0030426">
    <property type="term" value="C:growth cone"/>
    <property type="evidence" value="ECO:0007669"/>
    <property type="project" value="UniProtKB-SubCell"/>
</dbReference>
<dbReference type="GO" id="GO:0043005">
    <property type="term" value="C:neuron projection"/>
    <property type="evidence" value="ECO:0000318"/>
    <property type="project" value="GO_Central"/>
</dbReference>
<dbReference type="GO" id="GO:0005634">
    <property type="term" value="C:nucleus"/>
    <property type="evidence" value="ECO:0000318"/>
    <property type="project" value="GO_Central"/>
</dbReference>
<dbReference type="GO" id="GO:0005524">
    <property type="term" value="F:ATP binding"/>
    <property type="evidence" value="ECO:0007669"/>
    <property type="project" value="UniProtKB-KW"/>
</dbReference>
<dbReference type="GO" id="GO:0046872">
    <property type="term" value="F:metal ion binding"/>
    <property type="evidence" value="ECO:0007669"/>
    <property type="project" value="UniProtKB-KW"/>
</dbReference>
<dbReference type="GO" id="GO:0106310">
    <property type="term" value="F:protein serine kinase activity"/>
    <property type="evidence" value="ECO:0007669"/>
    <property type="project" value="RHEA"/>
</dbReference>
<dbReference type="GO" id="GO:0004674">
    <property type="term" value="F:protein serine/threonine kinase activity"/>
    <property type="evidence" value="ECO:0000250"/>
    <property type="project" value="UniProtKB"/>
</dbReference>
<dbReference type="GO" id="GO:0030036">
    <property type="term" value="P:actin cytoskeleton organization"/>
    <property type="evidence" value="ECO:0000318"/>
    <property type="project" value="GO_Central"/>
</dbReference>
<dbReference type="GO" id="GO:0051496">
    <property type="term" value="P:positive regulation of stress fiber assembly"/>
    <property type="evidence" value="ECO:0000318"/>
    <property type="project" value="GO_Central"/>
</dbReference>
<dbReference type="GO" id="GO:0006468">
    <property type="term" value="P:protein phosphorylation"/>
    <property type="evidence" value="ECO:0000250"/>
    <property type="project" value="UniProtKB"/>
</dbReference>
<dbReference type="CDD" id="cd09462">
    <property type="entry name" value="LIM1_LIMK1"/>
    <property type="match status" value="1"/>
</dbReference>
<dbReference type="CDD" id="cd09464">
    <property type="entry name" value="LIM2_LIMK1"/>
    <property type="match status" value="1"/>
</dbReference>
<dbReference type="CDD" id="cd06754">
    <property type="entry name" value="PDZ_LIMK-like"/>
    <property type="match status" value="1"/>
</dbReference>
<dbReference type="CDD" id="cd14221">
    <property type="entry name" value="STKc_LIMK1"/>
    <property type="match status" value="1"/>
</dbReference>
<dbReference type="FunFam" id="1.10.510.10:FF:000282">
    <property type="entry name" value="LIM domain kinase 1"/>
    <property type="match status" value="1"/>
</dbReference>
<dbReference type="FunFam" id="2.10.110.10:FF:000082">
    <property type="entry name" value="LIM domain kinase 1"/>
    <property type="match status" value="1"/>
</dbReference>
<dbReference type="FunFam" id="2.10.110.10:FF:000083">
    <property type="entry name" value="LIM domain kinase 1"/>
    <property type="match status" value="1"/>
</dbReference>
<dbReference type="FunFam" id="2.30.42.10:FF:000101">
    <property type="entry name" value="LIM domain kinase 1"/>
    <property type="match status" value="1"/>
</dbReference>
<dbReference type="FunFam" id="3.30.200.20:FF:000038">
    <property type="entry name" value="LIM domain kinase 2"/>
    <property type="match status" value="1"/>
</dbReference>
<dbReference type="Gene3D" id="2.30.42.10">
    <property type="match status" value="1"/>
</dbReference>
<dbReference type="Gene3D" id="2.10.110.10">
    <property type="entry name" value="Cysteine Rich Protein"/>
    <property type="match status" value="2"/>
</dbReference>
<dbReference type="Gene3D" id="3.30.200.20">
    <property type="entry name" value="Phosphorylase Kinase, domain 1"/>
    <property type="match status" value="1"/>
</dbReference>
<dbReference type="Gene3D" id="1.10.510.10">
    <property type="entry name" value="Transferase(Phosphotransferase) domain 1"/>
    <property type="match status" value="1"/>
</dbReference>
<dbReference type="InterPro" id="IPR050940">
    <property type="entry name" value="Actin_reg-Ser/Thr_kinase"/>
</dbReference>
<dbReference type="InterPro" id="IPR011009">
    <property type="entry name" value="Kinase-like_dom_sf"/>
</dbReference>
<dbReference type="InterPro" id="IPR001478">
    <property type="entry name" value="PDZ"/>
</dbReference>
<dbReference type="InterPro" id="IPR036034">
    <property type="entry name" value="PDZ_sf"/>
</dbReference>
<dbReference type="InterPro" id="IPR000719">
    <property type="entry name" value="Prot_kinase_dom"/>
</dbReference>
<dbReference type="InterPro" id="IPR017441">
    <property type="entry name" value="Protein_kinase_ATP_BS"/>
</dbReference>
<dbReference type="InterPro" id="IPR001245">
    <property type="entry name" value="Ser-Thr/Tyr_kinase_cat_dom"/>
</dbReference>
<dbReference type="InterPro" id="IPR001781">
    <property type="entry name" value="Znf_LIM"/>
</dbReference>
<dbReference type="PANTHER" id="PTHR46485">
    <property type="entry name" value="LIM DOMAIN KINASE 1"/>
    <property type="match status" value="1"/>
</dbReference>
<dbReference type="PANTHER" id="PTHR46485:SF7">
    <property type="entry name" value="LIM DOMAIN KINASE 1"/>
    <property type="match status" value="1"/>
</dbReference>
<dbReference type="Pfam" id="PF00412">
    <property type="entry name" value="LIM"/>
    <property type="match status" value="2"/>
</dbReference>
<dbReference type="Pfam" id="PF00595">
    <property type="entry name" value="PDZ"/>
    <property type="match status" value="1"/>
</dbReference>
<dbReference type="Pfam" id="PF07714">
    <property type="entry name" value="PK_Tyr_Ser-Thr"/>
    <property type="match status" value="1"/>
</dbReference>
<dbReference type="PRINTS" id="PR00109">
    <property type="entry name" value="TYRKINASE"/>
</dbReference>
<dbReference type="SMART" id="SM00132">
    <property type="entry name" value="LIM"/>
    <property type="match status" value="2"/>
</dbReference>
<dbReference type="SMART" id="SM00228">
    <property type="entry name" value="PDZ"/>
    <property type="match status" value="1"/>
</dbReference>
<dbReference type="SUPFAM" id="SSF57716">
    <property type="entry name" value="Glucocorticoid receptor-like (DNA-binding domain)"/>
    <property type="match status" value="3"/>
</dbReference>
<dbReference type="SUPFAM" id="SSF50156">
    <property type="entry name" value="PDZ domain-like"/>
    <property type="match status" value="1"/>
</dbReference>
<dbReference type="SUPFAM" id="SSF56112">
    <property type="entry name" value="Protein kinase-like (PK-like)"/>
    <property type="match status" value="1"/>
</dbReference>
<dbReference type="PROSITE" id="PS00478">
    <property type="entry name" value="LIM_DOMAIN_1"/>
    <property type="match status" value="2"/>
</dbReference>
<dbReference type="PROSITE" id="PS50023">
    <property type="entry name" value="LIM_DOMAIN_2"/>
    <property type="match status" value="2"/>
</dbReference>
<dbReference type="PROSITE" id="PS50106">
    <property type="entry name" value="PDZ"/>
    <property type="match status" value="1"/>
</dbReference>
<dbReference type="PROSITE" id="PS00107">
    <property type="entry name" value="PROTEIN_KINASE_ATP"/>
    <property type="match status" value="1"/>
</dbReference>
<dbReference type="PROSITE" id="PS50011">
    <property type="entry name" value="PROTEIN_KINASE_DOM"/>
    <property type="match status" value="1"/>
</dbReference>
<reference key="1">
    <citation type="journal article" date="2003" name="J. Neurosci.">
        <title>Control of growth cone motility and morphology by LIM kinase and Slingshot via phosphorylation and dephosphorylation of cofilin.</title>
        <authorList>
            <person name="Endo M."/>
            <person name="Ohashi K."/>
            <person name="Sasaki Y."/>
            <person name="Goshima Y."/>
            <person name="Niwa R."/>
            <person name="Uemura T."/>
            <person name="Mizuno K."/>
        </authorList>
    </citation>
    <scope>NUCLEOTIDE SEQUENCE [MRNA]</scope>
    <scope>FUNCTION</scope>
    <scope>SUBCELLULAR LOCATION</scope>
    <scope>TISSUE SPECIFICITY</scope>
    <scope>MUTAGENESIS OF ASP-467</scope>
    <source>
        <tissue>Embryo</tissue>
    </source>
</reference>
<organism>
    <name type="scientific">Gallus gallus</name>
    <name type="common">Chicken</name>
    <dbReference type="NCBI Taxonomy" id="9031"/>
    <lineage>
        <taxon>Eukaryota</taxon>
        <taxon>Metazoa</taxon>
        <taxon>Chordata</taxon>
        <taxon>Craniata</taxon>
        <taxon>Vertebrata</taxon>
        <taxon>Euteleostomi</taxon>
        <taxon>Archelosauria</taxon>
        <taxon>Archosauria</taxon>
        <taxon>Dinosauria</taxon>
        <taxon>Saurischia</taxon>
        <taxon>Theropoda</taxon>
        <taxon>Coelurosauria</taxon>
        <taxon>Aves</taxon>
        <taxon>Neognathae</taxon>
        <taxon>Galloanserae</taxon>
        <taxon>Galliformes</taxon>
        <taxon>Phasianidae</taxon>
        <taxon>Phasianinae</taxon>
        <taxon>Gallus</taxon>
    </lineage>
</organism>
<evidence type="ECO:0000250" key="1">
    <source>
        <dbReference type="UniProtKB" id="P53667"/>
    </source>
</evidence>
<evidence type="ECO:0000255" key="2">
    <source>
        <dbReference type="PROSITE-ProRule" id="PRU00125"/>
    </source>
</evidence>
<evidence type="ECO:0000255" key="3">
    <source>
        <dbReference type="PROSITE-ProRule" id="PRU00143"/>
    </source>
</evidence>
<evidence type="ECO:0000255" key="4">
    <source>
        <dbReference type="PROSITE-ProRule" id="PRU00159"/>
    </source>
</evidence>
<evidence type="ECO:0000256" key="5">
    <source>
        <dbReference type="SAM" id="MobiDB-lite"/>
    </source>
</evidence>
<evidence type="ECO:0000269" key="6">
    <source>
    </source>
</evidence>
<evidence type="ECO:0000305" key="7"/>
<sequence>MRLMLLCCTWRDEPMGEEEGTDLPVCASCGQGIFDGQYLQALNADWHADCFRCGECGASLSHQYYEKDGRLYCKKDYWARFGELCHGCAEQITKGLVMVAGEQKYHPECFSCLNCRAFIGDGDTYALVERSKLYCGHCYYQMVVTPVIEQILPDSPGSRIPHTVTLVSIPACSDGKRGFSVSIDPHCGAQGCGAEHSRTVRVREVDPDCISPDVKNSIHVGDRILEINGTPIGHVPLDEIDLLIQETSRLLQLTIEHDPHEPLPRDLALPCSPLPDPHSPLRSPVPAPHGDLGTMRQRAVMRSCSTDKSPGSSSVGSPASQRKDIGRSESLRVVSRAHRIFRPSDLIHGEVLGKGCFGQAIKVTHRETGEVMVMKELIRFDEETQRTFLKEVKVMRCLEHPNVLKFIGVLYKEKRLNFITEYIKGGTLRGLIKSMDSHYPWSQRVSFAKDIAAGMAYLHSMNIIHRDLNSHNCLVRENKSVVVADFGLARLMVDEKNQPEHLQNLKKPDRKKRYTVVGNPYWMAPEMINGRSYDEKVDIFSFGIVLCEIIGRVSADPDYLPRTTDFGLNVRGFLERYCPPACPPSFFPIAACCCDLDPEKRPSFSKLEQWLETLRMHLDIRLPLSSQLEQLTCAFWETHRRGEGGLPPHPELPDTAPHLHPL</sequence>
<gene>
    <name type="primary">LIMK1</name>
</gene>